<dbReference type="EC" id="4.2.3.52" evidence="4"/>
<dbReference type="EMBL" id="HQ426162">
    <property type="protein sequence ID" value="ADZ45504.1"/>
    <property type="molecule type" value="mRNA"/>
</dbReference>
<dbReference type="SMR" id="F2XFA4"/>
<dbReference type="OMA" id="FWTVGQI"/>
<dbReference type="UniPathway" id="UPA00924"/>
<dbReference type="GO" id="GO:0009507">
    <property type="term" value="C:chloroplast"/>
    <property type="evidence" value="ECO:0007669"/>
    <property type="project" value="UniProtKB-SubCell"/>
</dbReference>
<dbReference type="GO" id="GO:0016829">
    <property type="term" value="F:lyase activity"/>
    <property type="evidence" value="ECO:0000314"/>
    <property type="project" value="UniProtKB"/>
</dbReference>
<dbReference type="GO" id="GO:0000287">
    <property type="term" value="F:magnesium ion binding"/>
    <property type="evidence" value="ECO:0007669"/>
    <property type="project" value="InterPro"/>
</dbReference>
<dbReference type="GO" id="GO:0010333">
    <property type="term" value="F:terpene synthase activity"/>
    <property type="evidence" value="ECO:0007669"/>
    <property type="project" value="InterPro"/>
</dbReference>
<dbReference type="GO" id="GO:0016102">
    <property type="term" value="P:diterpenoid biosynthetic process"/>
    <property type="evidence" value="ECO:0007669"/>
    <property type="project" value="InterPro"/>
</dbReference>
<dbReference type="GO" id="GO:0010597">
    <property type="term" value="P:green leaf volatile biosynthetic process"/>
    <property type="evidence" value="ECO:0000314"/>
    <property type="project" value="UniProtKB"/>
</dbReference>
<dbReference type="GO" id="GO:0016099">
    <property type="term" value="P:monoterpenoid biosynthetic process"/>
    <property type="evidence" value="ECO:0000314"/>
    <property type="project" value="UniProtKB"/>
</dbReference>
<dbReference type="CDD" id="cd00684">
    <property type="entry name" value="Terpene_cyclase_plant_C1"/>
    <property type="match status" value="1"/>
</dbReference>
<dbReference type="FunFam" id="1.50.10.130:FF:000004">
    <property type="entry name" value="Carene synthase, chloroplastic"/>
    <property type="match status" value="1"/>
</dbReference>
<dbReference type="FunFam" id="1.10.600.10:FF:000005">
    <property type="entry name" value="Ent-kaur-16-ene synthase, chloroplastic"/>
    <property type="match status" value="1"/>
</dbReference>
<dbReference type="Gene3D" id="1.10.600.10">
    <property type="entry name" value="Farnesyl Diphosphate Synthase"/>
    <property type="match status" value="1"/>
</dbReference>
<dbReference type="Gene3D" id="1.50.10.130">
    <property type="entry name" value="Terpene synthase, N-terminal domain"/>
    <property type="match status" value="1"/>
</dbReference>
<dbReference type="InterPro" id="IPR008949">
    <property type="entry name" value="Isoprenoid_synthase_dom_sf"/>
</dbReference>
<dbReference type="InterPro" id="IPR034741">
    <property type="entry name" value="Terpene_cyclase-like_1_C"/>
</dbReference>
<dbReference type="InterPro" id="IPR044814">
    <property type="entry name" value="Terpene_cyclase_plant_C1"/>
</dbReference>
<dbReference type="InterPro" id="IPR001906">
    <property type="entry name" value="Terpene_synth_N"/>
</dbReference>
<dbReference type="InterPro" id="IPR036965">
    <property type="entry name" value="Terpene_synth_N_sf"/>
</dbReference>
<dbReference type="InterPro" id="IPR050148">
    <property type="entry name" value="Terpene_synthase-like"/>
</dbReference>
<dbReference type="InterPro" id="IPR005630">
    <property type="entry name" value="Terpene_synthase_metal-bd"/>
</dbReference>
<dbReference type="InterPro" id="IPR008930">
    <property type="entry name" value="Terpenoid_cyclase/PrenylTrfase"/>
</dbReference>
<dbReference type="PANTHER" id="PTHR31225">
    <property type="entry name" value="OS04G0344100 PROTEIN-RELATED"/>
    <property type="match status" value="1"/>
</dbReference>
<dbReference type="Pfam" id="PF01397">
    <property type="entry name" value="Terpene_synth"/>
    <property type="match status" value="1"/>
</dbReference>
<dbReference type="Pfam" id="PF03936">
    <property type="entry name" value="Terpene_synth_C"/>
    <property type="match status" value="1"/>
</dbReference>
<dbReference type="SFLD" id="SFLDS00005">
    <property type="entry name" value="Isoprenoid_Synthase_Type_I"/>
    <property type="match status" value="1"/>
</dbReference>
<dbReference type="SFLD" id="SFLDG01019">
    <property type="entry name" value="Terpene_Cyclase_Like_1_C_Termi"/>
    <property type="match status" value="1"/>
</dbReference>
<dbReference type="SFLD" id="SFLDG01014">
    <property type="entry name" value="Terpene_Cyclase_Like_1_N-term"/>
    <property type="match status" value="1"/>
</dbReference>
<dbReference type="SUPFAM" id="SSF48239">
    <property type="entry name" value="Terpenoid cyclases/Protein prenyltransferases"/>
    <property type="match status" value="1"/>
</dbReference>
<dbReference type="SUPFAM" id="SSF48576">
    <property type="entry name" value="Terpenoid synthases"/>
    <property type="match status" value="1"/>
</dbReference>
<comment type="function">
    <text evidence="4">Terpene synthase (TPS) involved in the biosynthesis of monoterpene natural products included in conifer oleoresin secretions and volatile emissions; these compounds contribute to biotic and abiotic stress defense against herbivores and pathogens (PubMed:21385377). Catalyzes the conversion of (2E)-geranyl diphosphate (GPP) to (-)-beta-phellandrene (PubMed:21385377).</text>
</comment>
<comment type="catalytic activity">
    <reaction evidence="4">
        <text>(2E)-geranyl diphosphate = (-)-beta-phellandrene + diphosphate</text>
        <dbReference type="Rhea" id="RHEA:25492"/>
        <dbReference type="ChEBI" id="CHEBI:129"/>
        <dbReference type="ChEBI" id="CHEBI:33019"/>
        <dbReference type="ChEBI" id="CHEBI:58057"/>
        <dbReference type="EC" id="4.2.3.52"/>
    </reaction>
</comment>
<comment type="cofactor">
    <cofactor evidence="1">
        <name>Mg(2+)</name>
        <dbReference type="ChEBI" id="CHEBI:18420"/>
    </cofactor>
    <cofactor evidence="1">
        <name>Mn(2+)</name>
        <dbReference type="ChEBI" id="CHEBI:29035"/>
    </cofactor>
    <text evidence="1">Binds 3 Mg(2+) or Mn(2+) ions per subunit.</text>
</comment>
<comment type="pathway">
    <text evidence="4">Terpene metabolism; oleoresin biosynthesis.</text>
</comment>
<comment type="subcellular location">
    <subcellularLocation>
        <location evidence="3">Plastid</location>
        <location evidence="3">Chloroplast</location>
    </subcellularLocation>
</comment>
<comment type="domain">
    <text evidence="1">The Asp-Asp-Xaa-Xaa-Asp/Glu (DDXXD/E) motif is important for the catalytic activity, presumably through binding to Mg(2+).</text>
</comment>
<comment type="similarity">
    <text evidence="6">Belongs to the terpene synthase family. Tpsd subfamily.</text>
</comment>
<evidence type="ECO:0000250" key="1">
    <source>
        <dbReference type="UniProtKB" id="A0A1C9J6A7"/>
    </source>
</evidence>
<evidence type="ECO:0000250" key="2">
    <source>
        <dbReference type="UniProtKB" id="Q40577"/>
    </source>
</evidence>
<evidence type="ECO:0000255" key="3"/>
<evidence type="ECO:0000269" key="4">
    <source>
    </source>
</evidence>
<evidence type="ECO:0000303" key="5">
    <source>
    </source>
</evidence>
<evidence type="ECO:0000305" key="6"/>
<reference key="1">
    <citation type="journal article" date="2011" name="BMC Plant Biol.">
        <title>Transcriptome mining, functional characterization, and phylogeny of a large terpene synthase gene family in spruce (Picea spp.).</title>
        <authorList>
            <person name="Keeling C.I."/>
            <person name="Weisshaar S."/>
            <person name="Ralph S.G."/>
            <person name="Jancsik S."/>
            <person name="Hamberger B."/>
            <person name="Dullat H.K."/>
            <person name="Bohlmann J."/>
        </authorList>
    </citation>
    <scope>NUCLEOTIDE SEQUENCE [MRNA]</scope>
    <scope>CATALYTIC ACTIVITY</scope>
    <scope>FUNCTION</scope>
    <scope>PATHWAY</scope>
    <scope>GENE FAMILY</scope>
    <source>
        <strain>cv. FB3-425</strain>
    </source>
</reference>
<keyword id="KW-0150">Chloroplast</keyword>
<keyword id="KW-0456">Lyase</keyword>
<keyword id="KW-0460">Magnesium</keyword>
<keyword id="KW-0479">Metal-binding</keyword>
<keyword id="KW-0934">Plastid</keyword>
<keyword id="KW-0809">Transit peptide</keyword>
<organism>
    <name type="scientific">Picea sitchensis</name>
    <name type="common">Sitka spruce</name>
    <name type="synonym">Pinus sitchensis</name>
    <dbReference type="NCBI Taxonomy" id="3332"/>
    <lineage>
        <taxon>Eukaryota</taxon>
        <taxon>Viridiplantae</taxon>
        <taxon>Streptophyta</taxon>
        <taxon>Embryophyta</taxon>
        <taxon>Tracheophyta</taxon>
        <taxon>Spermatophyta</taxon>
        <taxon>Pinopsida</taxon>
        <taxon>Pinidae</taxon>
        <taxon>Conifers I</taxon>
        <taxon>Pinales</taxon>
        <taxon>Pinaceae</taxon>
        <taxon>Picea</taxon>
    </lineage>
</organism>
<gene>
    <name evidence="5" type="primary">TPS-Phel-1</name>
</gene>
<name>BPHS1_PICSI</name>
<accession>F2XFA4</accession>
<sequence>MAIVSSVPLASKSCLHKSLISSIHKLKPFCRTIPTLGMSRPGKYVMPSMSMSSPVSDDGVQRRTGGYHSNLWNDDIIQFLSTPYGEPAYRERGERLIDEVKNMFNSISMEDVEFSPLNDLIQRLWIVDSVERLGIDRHFKNEIKSTLDYVYSYWTQKGIGCGIESVVPDLNSTALGLRTLRLHGYPVSAEVLKHFQNQNGQFACSPSETEGEMRSIVNLYRASLIAFPGEKVMEEAEIFSTKYLKEALQKIPVSSLSREIGDVLEQDWHTNLPRLEARNYIDVFGQDTKDTKLYMKTEKLLELAKLEFNIFQSLQKTELDSLLRWWKDSGFPHITFSRHLHVEYYTLASCIAFEPQHSRFRLGFAKACHVITILDDMYDVFGTIDELELFTAQIKRWDPSATDCLPKYMKRMYMILYDMVNEMSREAETAQGRDTLNYARQAWEDFIDSYMQEAKWIATGYLPTFDEYFENGKVSSGHRVAALQPILTMDIPFPHDILKEVDFPSKLNDLASAILRLRGDTRCYKADRARGEEASCISCYMKDNPGATEEDALSHINAVISDVIKGLNWELLNPNSSVPISSKKHVFDVSRALHYGYKYRDGYSVSNIETKSLVMRTLLESVPF</sequence>
<protein>
    <recommendedName>
        <fullName evidence="5">(-)-beta-phellandrene synthase 1, chloroplastic</fullName>
        <ecNumber evidence="4">4.2.3.52</ecNumber>
    </recommendedName>
    <alternativeName>
        <fullName evidence="5">Terpene synthase TPS-Phel-1</fullName>
        <shortName evidence="5">PsTPS-Phel-1</shortName>
    </alternativeName>
</protein>
<feature type="transit peptide" description="Chloroplast" evidence="3">
    <location>
        <begin position="1"/>
        <end position="48"/>
    </location>
</feature>
<feature type="chain" id="PRO_0000454404" description="(-)-beta-phellandrene synthase 1, chloroplastic">
    <location>
        <begin position="49"/>
        <end position="624"/>
    </location>
</feature>
<feature type="short sequence motif" description="DDXXD motif" evidence="1">
    <location>
        <begin position="375"/>
        <end position="379"/>
    </location>
</feature>
<feature type="binding site" evidence="2">
    <location>
        <position position="375"/>
    </location>
    <ligand>
        <name>Mg(2+)</name>
        <dbReference type="ChEBI" id="CHEBI:18420"/>
        <label>1</label>
    </ligand>
</feature>
<feature type="binding site" evidence="2">
    <location>
        <position position="375"/>
    </location>
    <ligand>
        <name>Mg(2+)</name>
        <dbReference type="ChEBI" id="CHEBI:18420"/>
        <label>2</label>
    </ligand>
</feature>
<feature type="binding site" evidence="2">
    <location>
        <position position="379"/>
    </location>
    <ligand>
        <name>Mg(2+)</name>
        <dbReference type="ChEBI" id="CHEBI:18420"/>
        <label>1</label>
    </ligand>
</feature>
<feature type="binding site" evidence="2">
    <location>
        <position position="379"/>
    </location>
    <ligand>
        <name>Mg(2+)</name>
        <dbReference type="ChEBI" id="CHEBI:18420"/>
        <label>2</label>
    </ligand>
</feature>
<feature type="binding site" evidence="2">
    <location>
        <position position="527"/>
    </location>
    <ligand>
        <name>Mg(2+)</name>
        <dbReference type="ChEBI" id="CHEBI:18420"/>
        <label>3</label>
    </ligand>
</feature>
<proteinExistence type="evidence at protein level"/>